<gene>
    <name type="primary">cotE</name>
    <name type="synonym">SP65</name>
    <name type="ORF">DDB_G0277903</name>
</gene>
<comment type="function">
    <text>Forms a triad with cellulose and pspB that is essential for spore outer layer formation.</text>
</comment>
<comment type="subunit">
    <text>Binds to the C-terminal region of pspB.</text>
</comment>
<comment type="interaction">
    <interactant intactId="EBI-1808756">
        <id>Q9NAX4</id>
    </interactant>
    <interactant intactId="EBI-1808765">
        <id>P54704</id>
        <label>pspB</label>
    </interactant>
    <organismsDiffer>false</organismsDiffer>
    <experiments>2</experiments>
</comment>
<comment type="subcellular location">
    <subcellularLocation>
        <location evidence="4">Spore wall</location>
    </subcellularLocation>
    <text>Depends on pspB for incorporation into the coat. Accumulates initially in vesicles distinct from prespore vesicles (PSVs).</text>
</comment>
<comment type="developmental stage">
    <text evidence="4">Expressed at or just prior to spore coat formation, at 20 to 22 hours of development of the fruiting bodies. Secreted to the cell surface before cellulose is deposited.</text>
</comment>
<comment type="domain">
    <text>The N-terminal part (18-235) contains the information required for insertion into the coat.</text>
</comment>
<name>SP65_DICDI</name>
<sequence>MKVLLLLVCLVFAYVNASYDACYNVVCPSNYQCRAEGDQAYCVPEHHEYGCDRHSCGRGYECVERWDSFCCKPIHHRPHPHPRPPHPHPRPTNCDYTSCPREFDCHVINRNVTACLPDNHVCRDFQCPVGTHCFNGERGPHCVSDTHYPNLCRVTKCSYDFTCKMVRGNPTCLRNHDGISTHSPTHTPTHSPTTSPTHCPSCTELAPFCHSAGLVCRTILNPSCVSAVRGIINTRSCCTYIAVCASNSTSTTGATTGATTPTSTTGAATTAAATTTTATSTTGAATTAPATTTTTSTTGAATTAPATTTTSTTGAATTAPATTTTTATTIVGVTTANSVGGLTTTRATTVAGVTTANSVGGLTTAGITTVAGATTGNSVGGLTTARATTVADVTTANSVGGLTTAGVTTVAGATTGNSVGGLTTARATTVADVTTANSVGGLTTSRATTIAGATTANSIGGLTN</sequence>
<protein>
    <recommendedName>
        <fullName>Spore coat protein SP65</fullName>
        <shortName>Spore coat protein E</shortName>
    </recommendedName>
</protein>
<reference key="1">
    <citation type="journal article" date="2007" name="Eukaryot. Cell">
        <title>Role of SP65 in assembly of the Dictyostelium discoideum spore coat.</title>
        <authorList>
            <person name="Metcalf T."/>
            <person name="van der Wel H."/>
            <person name="Escalante R."/>
            <person name="Sastre L."/>
            <person name="West C.M."/>
        </authorList>
    </citation>
    <scope>NUCLEOTIDE SEQUENCE [GENOMIC DNA]</scope>
    <scope>SUBCELLULAR LOCATION</scope>
    <scope>DEVELOPMENTAL STAGE</scope>
    <scope>INTERACTION WITH SP85</scope>
</reference>
<reference key="2">
    <citation type="journal article" date="2005" name="Nature">
        <title>The genome of the social amoeba Dictyostelium discoideum.</title>
        <authorList>
            <person name="Eichinger L."/>
            <person name="Pachebat J.A."/>
            <person name="Gloeckner G."/>
            <person name="Rajandream M.A."/>
            <person name="Sucgang R."/>
            <person name="Berriman M."/>
            <person name="Song J."/>
            <person name="Olsen R."/>
            <person name="Szafranski K."/>
            <person name="Xu Q."/>
            <person name="Tunggal B."/>
            <person name="Kummerfeld S."/>
            <person name="Madera M."/>
            <person name="Konfortov B.A."/>
            <person name="Rivero F."/>
            <person name="Bankier A.T."/>
            <person name="Lehmann R."/>
            <person name="Hamlin N."/>
            <person name="Davies R."/>
            <person name="Gaudet P."/>
            <person name="Fey P."/>
            <person name="Pilcher K."/>
            <person name="Chen G."/>
            <person name="Saunders D."/>
            <person name="Sodergren E.J."/>
            <person name="Davis P."/>
            <person name="Kerhornou A."/>
            <person name="Nie X."/>
            <person name="Hall N."/>
            <person name="Anjard C."/>
            <person name="Hemphill L."/>
            <person name="Bason N."/>
            <person name="Farbrother P."/>
            <person name="Desany B."/>
            <person name="Just E."/>
            <person name="Morio T."/>
            <person name="Rost R."/>
            <person name="Churcher C.M."/>
            <person name="Cooper J."/>
            <person name="Haydock S."/>
            <person name="van Driessche N."/>
            <person name="Cronin A."/>
            <person name="Goodhead I."/>
            <person name="Muzny D.M."/>
            <person name="Mourier T."/>
            <person name="Pain A."/>
            <person name="Lu M."/>
            <person name="Harper D."/>
            <person name="Lindsay R."/>
            <person name="Hauser H."/>
            <person name="James K.D."/>
            <person name="Quiles M."/>
            <person name="Madan Babu M."/>
            <person name="Saito T."/>
            <person name="Buchrieser C."/>
            <person name="Wardroper A."/>
            <person name="Felder M."/>
            <person name="Thangavelu M."/>
            <person name="Johnson D."/>
            <person name="Knights A."/>
            <person name="Loulseged H."/>
            <person name="Mungall K.L."/>
            <person name="Oliver K."/>
            <person name="Price C."/>
            <person name="Quail M.A."/>
            <person name="Urushihara H."/>
            <person name="Hernandez J."/>
            <person name="Rabbinowitsch E."/>
            <person name="Steffen D."/>
            <person name="Sanders M."/>
            <person name="Ma J."/>
            <person name="Kohara Y."/>
            <person name="Sharp S."/>
            <person name="Simmonds M.N."/>
            <person name="Spiegler S."/>
            <person name="Tivey A."/>
            <person name="Sugano S."/>
            <person name="White B."/>
            <person name="Walker D."/>
            <person name="Woodward J.R."/>
            <person name="Winckler T."/>
            <person name="Tanaka Y."/>
            <person name="Shaulsky G."/>
            <person name="Schleicher M."/>
            <person name="Weinstock G.M."/>
            <person name="Rosenthal A."/>
            <person name="Cox E.C."/>
            <person name="Chisholm R.L."/>
            <person name="Gibbs R.A."/>
            <person name="Loomis W.F."/>
            <person name="Platzer M."/>
            <person name="Kay R.R."/>
            <person name="Williams J.G."/>
            <person name="Dear P.H."/>
            <person name="Noegel A.A."/>
            <person name="Barrell B.G."/>
            <person name="Kuspa A."/>
        </authorList>
    </citation>
    <scope>NUCLEOTIDE SEQUENCE [LARGE SCALE GENOMIC DNA]</scope>
    <source>
        <strain>AX4</strain>
    </source>
</reference>
<reference key="3">
    <citation type="journal article" date="1999" name="J. Cell Sci.">
        <title>A linking function for the cellulose-binding protein SP85 in the spore coat of Dictyostelium discoideum.</title>
        <authorList>
            <person name="Zhang Y."/>
            <person name="Zhang P."/>
            <person name="West C.M."/>
        </authorList>
    </citation>
    <scope>PROTEIN SEQUENCE OF 18-47 AND 166-180</scope>
    <scope>INTERACTION WITH SP85</scope>
</reference>
<keyword id="KW-0903">Direct protein sequencing</keyword>
<keyword id="KW-0325">Glycoprotein</keyword>
<keyword id="KW-1185">Reference proteome</keyword>
<keyword id="KW-0677">Repeat</keyword>
<keyword id="KW-0732">Signal</keyword>
<keyword id="KW-0749">Sporulation</keyword>
<feature type="signal peptide" evidence="3">
    <location>
        <begin position="1"/>
        <end position="17"/>
    </location>
</feature>
<feature type="chain" id="PRO_0000327782" description="Spore coat protein SP65">
    <location>
        <begin position="18"/>
        <end position="464"/>
    </location>
</feature>
<feature type="domain" description="Follistatin-like 1">
    <location>
        <begin position="21"/>
        <end position="43"/>
    </location>
</feature>
<feature type="domain" description="Follistatin-like 2">
    <location>
        <begin position="121"/>
        <end position="143"/>
    </location>
</feature>
<feature type="domain" description="Follistatin-like 3">
    <location>
        <begin position="151"/>
        <end position="173"/>
    </location>
</feature>
<feature type="region of interest" description="Disordered" evidence="2">
    <location>
        <begin position="250"/>
        <end position="320"/>
    </location>
</feature>
<feature type="glycosylation site" description="N-linked (GlcNAc...) asparagine" evidence="1">
    <location>
        <position position="111"/>
    </location>
</feature>
<feature type="glycosylation site" description="N-linked (GlcNAc...) asparagine" evidence="1">
    <location>
        <position position="247"/>
    </location>
</feature>
<feature type="sequence conflict" description="In Ref. 3; AA sequence." evidence="5" ref="3">
    <location>
        <position position="44"/>
    </location>
</feature>
<evidence type="ECO:0000255" key="1"/>
<evidence type="ECO:0000256" key="2">
    <source>
        <dbReference type="SAM" id="MobiDB-lite"/>
    </source>
</evidence>
<evidence type="ECO:0000269" key="3">
    <source>
    </source>
</evidence>
<evidence type="ECO:0000269" key="4">
    <source>
    </source>
</evidence>
<evidence type="ECO:0000305" key="5"/>
<organism>
    <name type="scientific">Dictyostelium discoideum</name>
    <name type="common">Social amoeba</name>
    <dbReference type="NCBI Taxonomy" id="44689"/>
    <lineage>
        <taxon>Eukaryota</taxon>
        <taxon>Amoebozoa</taxon>
        <taxon>Evosea</taxon>
        <taxon>Eumycetozoa</taxon>
        <taxon>Dictyostelia</taxon>
        <taxon>Dictyosteliales</taxon>
        <taxon>Dictyosteliaceae</taxon>
        <taxon>Dictyostelium</taxon>
    </lineage>
</organism>
<proteinExistence type="evidence at protein level"/>
<accession>Q9NAX4</accession>
<accession>Q54YL6</accession>
<dbReference type="EMBL" id="AF279135">
    <property type="protein sequence ID" value="AAF82380.1"/>
    <property type="molecule type" value="Genomic_DNA"/>
</dbReference>
<dbReference type="EMBL" id="AAFI02000023">
    <property type="protein sequence ID" value="EAL68124.1"/>
    <property type="molecule type" value="Genomic_DNA"/>
</dbReference>
<dbReference type="RefSeq" id="XP_642186.1">
    <property type="nucleotide sequence ID" value="XM_637094.1"/>
</dbReference>
<dbReference type="FunCoup" id="Q9NAX4">
    <property type="interactions" value="2"/>
</dbReference>
<dbReference type="IntAct" id="Q9NAX4">
    <property type="interactions" value="1"/>
</dbReference>
<dbReference type="STRING" id="44689.Q9NAX4"/>
<dbReference type="GlyCosmos" id="Q9NAX4">
    <property type="glycosylation" value="2 sites, No reported glycans"/>
</dbReference>
<dbReference type="GlyGen" id="Q9NAX4">
    <property type="glycosylation" value="2 sites"/>
</dbReference>
<dbReference type="PaxDb" id="44689-DDB0214991"/>
<dbReference type="EnsemblProtists" id="EAL68124">
    <property type="protein sequence ID" value="EAL68124"/>
    <property type="gene ID" value="DDB_G0277903"/>
</dbReference>
<dbReference type="GeneID" id="8621393"/>
<dbReference type="KEGG" id="ddi:DDB_G0277903"/>
<dbReference type="dictyBase" id="DDB_G0277903">
    <property type="gene designation" value="cotE"/>
</dbReference>
<dbReference type="VEuPathDB" id="AmoebaDB:DDB_G0277903"/>
<dbReference type="HOGENOM" id="CLU_589780_0_0_1"/>
<dbReference type="InParanoid" id="Q9NAX4"/>
<dbReference type="OMA" id="CQWDYTG"/>
<dbReference type="PRO" id="PR:Q9NAX4"/>
<dbReference type="Proteomes" id="UP000002195">
    <property type="component" value="Chromosome 3"/>
</dbReference>
<dbReference type="GO" id="GO:0031410">
    <property type="term" value="C:cytoplasmic vesicle"/>
    <property type="evidence" value="ECO:0000314"/>
    <property type="project" value="dictyBase"/>
</dbReference>
<dbReference type="GO" id="GO:0031160">
    <property type="term" value="C:spore wall"/>
    <property type="evidence" value="ECO:0000314"/>
    <property type="project" value="dictyBase"/>
</dbReference>
<dbReference type="GO" id="GO:0005199">
    <property type="term" value="F:structural constituent of cell wall"/>
    <property type="evidence" value="ECO:0000315"/>
    <property type="project" value="dictyBase"/>
</dbReference>
<dbReference type="GO" id="GO:0042244">
    <property type="term" value="P:spore wall assembly"/>
    <property type="evidence" value="ECO:0000315"/>
    <property type="project" value="dictyBase"/>
</dbReference>
<dbReference type="GO" id="GO:0030435">
    <property type="term" value="P:sporulation resulting in formation of a cellular spore"/>
    <property type="evidence" value="ECO:0000315"/>
    <property type="project" value="dictyBase"/>
</dbReference>
<dbReference type="InterPro" id="IPR003645">
    <property type="entry name" value="Fol_N"/>
</dbReference>
<dbReference type="InterPro" id="IPR053121">
    <property type="entry name" value="Spore_Coat_Assembly"/>
</dbReference>
<dbReference type="PANTHER" id="PTHR35365">
    <property type="entry name" value="LP04239P"/>
    <property type="match status" value="1"/>
</dbReference>
<dbReference type="PANTHER" id="PTHR35365:SF18">
    <property type="entry name" value="MUCIN-19-LIKE-RELATED"/>
    <property type="match status" value="1"/>
</dbReference>
<dbReference type="SMART" id="SM00274">
    <property type="entry name" value="FOLN"/>
    <property type="match status" value="3"/>
</dbReference>